<keyword id="KW-0025">Alternative splicing</keyword>
<keyword id="KW-1267">Proteomics identification</keyword>
<keyword id="KW-1185">Reference proteome</keyword>
<sequence length="765" mass="86558">MFSKFTSILQHAVEALAPSLPLQEDFVYHWKAITHYYIETSDDKAPVTDTNIPSHLEQMLDILVQEENERESGETGPCMEYLLHHKILETLYTLGKADCPPGMKQQVLVFYTKLLGRIRQPLLPHINVHRPVQKLIRLCGEVLATPTENEEIQFLCIVCAKLKQDPYLVNFFLENKMKSLASKGVPNVISEDTLKGQDSLSTDTGQSRQPEELSGATGMEQTELEDEPPHQMDHLSTSLDNLSVTSLPEASVVCPNQDYNLVNSLLNLTRSPDGRIAVKACEGLMLLVSLPEPAAAKCLTQSTCLCELLTDRLASLYKALPQSVDPLDIETVEAINWGLDSYSHKEDASAFPGKRALISFLSWFDYCDQLIKEAQKTAAVALAKAVHERFFIGVMEPQLMQTSEMGILTSTALLHRIVRQVTSDVLLQEMVFFILGEQREPETLAEISRHPLRHRLIEHCDHISDEISIMTLRMFEHLLQKPNEHILYNLVLRNLEERNYTEYKPLCPEDKDVVENGLIAGAVDLEEDPLFTDISPENTLPNQEWLSSSPPATPDHPKNDGKTEVHKIVNSFLCLVPDDAKSSYHVEGTGYDTYLRDAHRQFRDYCAICLRWEWPGSPKALEKCNLEAAFFEGHFLKVLFDRMGRILDQPYDVNLQVTSVLSRLSLFPHPHIHEYLLDPYVNLAPGCRSLFSVIVRVVGDLMLRIQRIQDFTPKLLLVRKRLLGLEPEGPIIDHITLLEGVIVLEEFCKELAAIAFVKYHASSTP</sequence>
<proteinExistence type="evidence at protein level"/>
<gene>
    <name evidence="6" type="primary">FHIP2A</name>
    <name type="synonym">FAM160B1</name>
    <name type="synonym">KIAA1600</name>
</gene>
<organism>
    <name type="scientific">Homo sapiens</name>
    <name type="common">Human</name>
    <dbReference type="NCBI Taxonomy" id="9606"/>
    <lineage>
        <taxon>Eukaryota</taxon>
        <taxon>Metazoa</taxon>
        <taxon>Chordata</taxon>
        <taxon>Craniata</taxon>
        <taxon>Vertebrata</taxon>
        <taxon>Euteleostomi</taxon>
        <taxon>Mammalia</taxon>
        <taxon>Eutheria</taxon>
        <taxon>Euarchontoglires</taxon>
        <taxon>Primates</taxon>
        <taxon>Haplorrhini</taxon>
        <taxon>Catarrhini</taxon>
        <taxon>Hominidae</taxon>
        <taxon>Homo</taxon>
    </lineage>
</organism>
<protein>
    <recommendedName>
        <fullName evidence="5">FHF complex subunit HOOK interacting protein 2A</fullName>
        <shortName>FHIP2A</shortName>
    </recommendedName>
</protein>
<dbReference type="EMBL" id="CR933692">
    <property type="protein sequence ID" value="CAI45992.1"/>
    <property type="molecule type" value="mRNA"/>
</dbReference>
<dbReference type="EMBL" id="AL137025">
    <property type="status" value="NOT_ANNOTATED_CDS"/>
    <property type="molecule type" value="Genomic_DNA"/>
</dbReference>
<dbReference type="EMBL" id="BC037207">
    <property type="protein sequence ID" value="AAH37207.1"/>
    <property type="molecule type" value="mRNA"/>
</dbReference>
<dbReference type="EMBL" id="AB046820">
    <property type="protein sequence ID" value="BAB13426.2"/>
    <property type="molecule type" value="mRNA"/>
</dbReference>
<dbReference type="CCDS" id="CCDS31290.1">
    <molecule id="Q5W0V3-1"/>
</dbReference>
<dbReference type="CCDS" id="CCDS44480.1">
    <molecule id="Q5W0V3-2"/>
</dbReference>
<dbReference type="RefSeq" id="NP_001128523.1">
    <molecule id="Q5W0V3-2"/>
    <property type="nucleotide sequence ID" value="NM_001135051.2"/>
</dbReference>
<dbReference type="RefSeq" id="NP_065991.3">
    <molecule id="Q5W0V3-1"/>
    <property type="nucleotide sequence ID" value="NM_020940.4"/>
</dbReference>
<dbReference type="SMR" id="Q5W0V3"/>
<dbReference type="BioGRID" id="121725">
    <property type="interactions" value="65"/>
</dbReference>
<dbReference type="ComplexPortal" id="CPX-2357">
    <property type="entry name" value="FTS-Hook-FHIP cargo adaptor complex, FHIP2A-HOOK2 variant"/>
</dbReference>
<dbReference type="FunCoup" id="Q5W0V3">
    <property type="interactions" value="1997"/>
</dbReference>
<dbReference type="IntAct" id="Q5W0V3">
    <property type="interactions" value="198"/>
</dbReference>
<dbReference type="MINT" id="Q5W0V3"/>
<dbReference type="STRING" id="9606.ENSP00000358251"/>
<dbReference type="GlyGen" id="Q5W0V3">
    <property type="glycosylation" value="2 sites, 1 O-linked glycan (1 site)"/>
</dbReference>
<dbReference type="iPTMnet" id="Q5W0V3"/>
<dbReference type="MetOSite" id="Q5W0V3"/>
<dbReference type="PhosphoSitePlus" id="Q5W0V3"/>
<dbReference type="BioMuta" id="FAM160B1"/>
<dbReference type="DMDM" id="74747988"/>
<dbReference type="jPOST" id="Q5W0V3"/>
<dbReference type="MassIVE" id="Q5W0V3"/>
<dbReference type="PaxDb" id="9606-ENSP00000358251"/>
<dbReference type="PeptideAtlas" id="Q5W0V3"/>
<dbReference type="ProteomicsDB" id="65779">
    <molecule id="Q5W0V3-1"/>
</dbReference>
<dbReference type="ProteomicsDB" id="65780">
    <molecule id="Q5W0V3-2"/>
</dbReference>
<dbReference type="Pumba" id="Q5W0V3"/>
<dbReference type="Antibodypedia" id="52360">
    <property type="antibodies" value="111 antibodies from 19 providers"/>
</dbReference>
<dbReference type="DNASU" id="57700"/>
<dbReference type="Ensembl" id="ENST00000369248.9">
    <molecule id="Q5W0V3-1"/>
    <property type="protein sequence ID" value="ENSP00000358251.4"/>
    <property type="gene ID" value="ENSG00000151553.16"/>
</dbReference>
<dbReference type="Ensembl" id="ENST00000369250.7">
    <molecule id="Q5W0V3-2"/>
    <property type="protein sequence ID" value="ENSP00000358253.3"/>
    <property type="gene ID" value="ENSG00000151553.16"/>
</dbReference>
<dbReference type="GeneID" id="57700"/>
<dbReference type="KEGG" id="hsa:57700"/>
<dbReference type="MANE-Select" id="ENST00000369248.9">
    <property type="protein sequence ID" value="ENSP00000358251.4"/>
    <property type="RefSeq nucleotide sequence ID" value="NM_020940.4"/>
    <property type="RefSeq protein sequence ID" value="NP_065991.3"/>
</dbReference>
<dbReference type="UCSC" id="uc001lcb.4">
    <molecule id="Q5W0V3-1"/>
    <property type="organism name" value="human"/>
</dbReference>
<dbReference type="AGR" id="HGNC:29320"/>
<dbReference type="CTD" id="57700"/>
<dbReference type="DisGeNET" id="57700"/>
<dbReference type="GeneCards" id="FHIP2A"/>
<dbReference type="HGNC" id="HGNC:29320">
    <property type="gene designation" value="FHIP2A"/>
</dbReference>
<dbReference type="HPA" id="ENSG00000151553">
    <property type="expression patterns" value="Tissue enhanced (bone)"/>
</dbReference>
<dbReference type="MIM" id="617312">
    <property type="type" value="gene"/>
</dbReference>
<dbReference type="neXtProt" id="NX_Q5W0V3"/>
<dbReference type="OpenTargets" id="ENSG00000151553"/>
<dbReference type="VEuPathDB" id="HostDB:ENSG00000151553"/>
<dbReference type="eggNOG" id="KOG3695">
    <property type="taxonomic scope" value="Eukaryota"/>
</dbReference>
<dbReference type="GeneTree" id="ENSGT00950000182936"/>
<dbReference type="HOGENOM" id="CLU_023718_0_0_1"/>
<dbReference type="InParanoid" id="Q5W0V3"/>
<dbReference type="OMA" id="VQTEFFF"/>
<dbReference type="OrthoDB" id="5350595at2759"/>
<dbReference type="PAN-GO" id="Q5W0V3">
    <property type="GO annotations" value="0 GO annotations based on evolutionary models"/>
</dbReference>
<dbReference type="PhylomeDB" id="Q5W0V3"/>
<dbReference type="TreeFam" id="TF313941"/>
<dbReference type="PathwayCommons" id="Q5W0V3"/>
<dbReference type="SignaLink" id="Q5W0V3"/>
<dbReference type="BioGRID-ORCS" id="57700">
    <property type="hits" value="9 hits in 1155 CRISPR screens"/>
</dbReference>
<dbReference type="ChiTaRS" id="FAM160B1">
    <property type="organism name" value="human"/>
</dbReference>
<dbReference type="GenomeRNAi" id="57700"/>
<dbReference type="Pharos" id="Q5W0V3">
    <property type="development level" value="Tdark"/>
</dbReference>
<dbReference type="PRO" id="PR:Q5W0V3"/>
<dbReference type="Proteomes" id="UP000005640">
    <property type="component" value="Chromosome 10"/>
</dbReference>
<dbReference type="RNAct" id="Q5W0V3">
    <property type="molecule type" value="protein"/>
</dbReference>
<dbReference type="Bgee" id="ENSG00000151553">
    <property type="expression patterns" value="Expressed in epithelial cell of pancreas and 193 other cell types or tissues"/>
</dbReference>
<dbReference type="ExpressionAtlas" id="Q5W0V3">
    <property type="expression patterns" value="baseline and differential"/>
</dbReference>
<dbReference type="InterPro" id="IPR019384">
    <property type="entry name" value="FHIP"/>
</dbReference>
<dbReference type="InterPro" id="IPR045669">
    <property type="entry name" value="FHIP_C"/>
</dbReference>
<dbReference type="InterPro" id="IPR045668">
    <property type="entry name" value="FHIP_KELAA_motif"/>
</dbReference>
<dbReference type="PANTHER" id="PTHR21705:SF10">
    <property type="entry name" value="FHF COMPLEX SUBUNIT HOOK INTERACTING PROTEIN 2A"/>
    <property type="match status" value="1"/>
</dbReference>
<dbReference type="PANTHER" id="PTHR21705">
    <property type="entry name" value="RAI16 PROTEIN-RELATED"/>
    <property type="match status" value="1"/>
</dbReference>
<dbReference type="Pfam" id="PF19314">
    <property type="entry name" value="DUF5917"/>
    <property type="match status" value="1"/>
</dbReference>
<dbReference type="Pfam" id="PF19311">
    <property type="entry name" value="KELAA"/>
    <property type="match status" value="1"/>
</dbReference>
<dbReference type="Pfam" id="PF10257">
    <property type="entry name" value="RAI16-like"/>
    <property type="match status" value="1"/>
</dbReference>
<accession>Q5W0V3</accession>
<accession>Q5H9P7</accession>
<accession>Q5W0V2</accession>
<accession>Q8IY76</accession>
<accession>Q9HCH2</accession>
<evidence type="ECO:0000256" key="1">
    <source>
        <dbReference type="SAM" id="MobiDB-lite"/>
    </source>
</evidence>
<evidence type="ECO:0000269" key="2">
    <source>
    </source>
</evidence>
<evidence type="ECO:0000269" key="3">
    <source>
    </source>
</evidence>
<evidence type="ECO:0000303" key="4">
    <source>
    </source>
</evidence>
<evidence type="ECO:0000305" key="5"/>
<evidence type="ECO:0000312" key="6">
    <source>
        <dbReference type="HGNC" id="HGNC:29320"/>
    </source>
</evidence>
<feature type="chain" id="PRO_0000284648" description="FHF complex subunit HOOK interacting protein 2A">
    <location>
        <begin position="1"/>
        <end position="765"/>
    </location>
</feature>
<feature type="region of interest" description="Disordered" evidence="1">
    <location>
        <begin position="193"/>
        <end position="236"/>
    </location>
</feature>
<feature type="region of interest" description="Disordered" evidence="1">
    <location>
        <begin position="532"/>
        <end position="561"/>
    </location>
</feature>
<feature type="compositionally biased region" description="Polar residues" evidence="1">
    <location>
        <begin position="196"/>
        <end position="208"/>
    </location>
</feature>
<feature type="compositionally biased region" description="Polar residues" evidence="1">
    <location>
        <begin position="535"/>
        <end position="550"/>
    </location>
</feature>
<feature type="splice variant" id="VSP_024590" description="In isoform 2." evidence="4">
    <original>IIDHITLL</original>
    <variation>MQTLPSWW</variation>
    <location>
        <begin position="731"/>
        <end position="738"/>
    </location>
</feature>
<feature type="splice variant" id="VSP_024591" description="In isoform 2." evidence="4">
    <location>
        <begin position="739"/>
        <end position="765"/>
    </location>
</feature>
<feature type="sequence variant" id="VAR_084432" description="Found in a patient with microcephaly severe intellectual disability, ataxia, behavioral abnormalities and speech problems; uncertain significance." evidence="3">
    <location>
        <begin position="39"/>
        <end position="765"/>
    </location>
</feature>
<feature type="sequence variant" id="VAR_031793" description="In dbSNP:rs17853717." evidence="2">
    <original>L</original>
    <variation>I</variation>
    <location>
        <position position="408"/>
    </location>
</feature>
<feature type="sequence variant" id="VAR_031794" description="In dbSNP:rs3180654.">
    <original>F</original>
    <variation>L</variation>
    <location>
        <position position="631"/>
    </location>
</feature>
<feature type="sequence conflict" description="In Ref. 1; CAI45992." evidence="5" ref="1">
    <original>E</original>
    <variation>G</variation>
    <location>
        <position position="39"/>
    </location>
</feature>
<feature type="sequence conflict" description="In Ref. 1; CAI45992." evidence="5" ref="1">
    <original>Q</original>
    <variation>R</variation>
    <location>
        <position position="120"/>
    </location>
</feature>
<feature type="sequence conflict" description="In Ref. 1; CAI45992." evidence="5" ref="1">
    <original>R</original>
    <variation>G</variation>
    <location>
        <position position="600"/>
    </location>
</feature>
<comment type="function">
    <text evidence="3">Required for proper functioning of the nervous system.</text>
</comment>
<comment type="interaction">
    <interactant intactId="EBI-7054959">
        <id>Q5W0V3</id>
    </interactant>
    <interactant intactId="EBI-743290">
        <id>Q96ED9</id>
        <label>HOOK2</label>
    </interactant>
    <organismsDiffer>false</organismsDiffer>
    <experiments>4</experiments>
</comment>
<comment type="alternative products">
    <event type="alternative splicing"/>
    <isoform>
        <id>Q5W0V3-1</id>
        <name>1</name>
        <sequence type="displayed"/>
    </isoform>
    <isoform>
        <id>Q5W0V3-2</id>
        <name>2</name>
        <sequence type="described" ref="VSP_024590 VSP_024591"/>
    </isoform>
</comment>
<comment type="tissue specificity">
    <molecule>Isoform 1</molecule>
    <text evidence="3">Expressed in all tissues tested, highly expressed brain.</text>
</comment>
<comment type="tissue specificity">
    <molecule>Isoform 2</molecule>
    <text evidence="3">Only detected at high levels in testis.</text>
</comment>
<comment type="similarity">
    <text evidence="5">Belongs to the FHIP family.</text>
</comment>
<name>FHI2A_HUMAN</name>
<reference key="1">
    <citation type="journal article" date="2007" name="BMC Genomics">
        <title>The full-ORF clone resource of the German cDNA consortium.</title>
        <authorList>
            <person name="Bechtel S."/>
            <person name="Rosenfelder H."/>
            <person name="Duda A."/>
            <person name="Schmidt C.P."/>
            <person name="Ernst U."/>
            <person name="Wellenreuther R."/>
            <person name="Mehrle A."/>
            <person name="Schuster C."/>
            <person name="Bahr A."/>
            <person name="Bloecker H."/>
            <person name="Heubner D."/>
            <person name="Hoerlein A."/>
            <person name="Michel G."/>
            <person name="Wedler H."/>
            <person name="Koehrer K."/>
            <person name="Ottenwaelder B."/>
            <person name="Poustka A."/>
            <person name="Wiemann S."/>
            <person name="Schupp I."/>
        </authorList>
    </citation>
    <scope>NUCLEOTIDE SEQUENCE [LARGE SCALE MRNA] (ISOFORM 1)</scope>
    <source>
        <tissue>Uterus</tissue>
    </source>
</reference>
<reference key="2">
    <citation type="journal article" date="2004" name="Nature">
        <title>The DNA sequence and comparative analysis of human chromosome 10.</title>
        <authorList>
            <person name="Deloukas P."/>
            <person name="Earthrowl M.E."/>
            <person name="Grafham D.V."/>
            <person name="Rubenfield M."/>
            <person name="French L."/>
            <person name="Steward C.A."/>
            <person name="Sims S.K."/>
            <person name="Jones M.C."/>
            <person name="Searle S."/>
            <person name="Scott C."/>
            <person name="Howe K."/>
            <person name="Hunt S.E."/>
            <person name="Andrews T.D."/>
            <person name="Gilbert J.G.R."/>
            <person name="Swarbreck D."/>
            <person name="Ashurst J.L."/>
            <person name="Taylor A."/>
            <person name="Battles J."/>
            <person name="Bird C.P."/>
            <person name="Ainscough R."/>
            <person name="Almeida J.P."/>
            <person name="Ashwell R.I.S."/>
            <person name="Ambrose K.D."/>
            <person name="Babbage A.K."/>
            <person name="Bagguley C.L."/>
            <person name="Bailey J."/>
            <person name="Banerjee R."/>
            <person name="Bates K."/>
            <person name="Beasley H."/>
            <person name="Bray-Allen S."/>
            <person name="Brown A.J."/>
            <person name="Brown J.Y."/>
            <person name="Burford D.C."/>
            <person name="Burrill W."/>
            <person name="Burton J."/>
            <person name="Cahill P."/>
            <person name="Camire D."/>
            <person name="Carter N.P."/>
            <person name="Chapman J.C."/>
            <person name="Clark S.Y."/>
            <person name="Clarke G."/>
            <person name="Clee C.M."/>
            <person name="Clegg S."/>
            <person name="Corby N."/>
            <person name="Coulson A."/>
            <person name="Dhami P."/>
            <person name="Dutta I."/>
            <person name="Dunn M."/>
            <person name="Faulkner L."/>
            <person name="Frankish A."/>
            <person name="Frankland J.A."/>
            <person name="Garner P."/>
            <person name="Garnett J."/>
            <person name="Gribble S."/>
            <person name="Griffiths C."/>
            <person name="Grocock R."/>
            <person name="Gustafson E."/>
            <person name="Hammond S."/>
            <person name="Harley J.L."/>
            <person name="Hart E."/>
            <person name="Heath P.D."/>
            <person name="Ho T.P."/>
            <person name="Hopkins B."/>
            <person name="Horne J."/>
            <person name="Howden P.J."/>
            <person name="Huckle E."/>
            <person name="Hynds C."/>
            <person name="Johnson C."/>
            <person name="Johnson D."/>
            <person name="Kana A."/>
            <person name="Kay M."/>
            <person name="Kimberley A.M."/>
            <person name="Kershaw J.K."/>
            <person name="Kokkinaki M."/>
            <person name="Laird G.K."/>
            <person name="Lawlor S."/>
            <person name="Lee H.M."/>
            <person name="Leongamornlert D.A."/>
            <person name="Laird G."/>
            <person name="Lloyd C."/>
            <person name="Lloyd D.M."/>
            <person name="Loveland J."/>
            <person name="Lovell J."/>
            <person name="McLaren S."/>
            <person name="McLay K.E."/>
            <person name="McMurray A."/>
            <person name="Mashreghi-Mohammadi M."/>
            <person name="Matthews L."/>
            <person name="Milne S."/>
            <person name="Nickerson T."/>
            <person name="Nguyen M."/>
            <person name="Overton-Larty E."/>
            <person name="Palmer S.A."/>
            <person name="Pearce A.V."/>
            <person name="Peck A.I."/>
            <person name="Pelan S."/>
            <person name="Phillimore B."/>
            <person name="Porter K."/>
            <person name="Rice C.M."/>
            <person name="Rogosin A."/>
            <person name="Ross M.T."/>
            <person name="Sarafidou T."/>
            <person name="Sehra H.K."/>
            <person name="Shownkeen R."/>
            <person name="Skuce C.D."/>
            <person name="Smith M."/>
            <person name="Standring L."/>
            <person name="Sycamore N."/>
            <person name="Tester J."/>
            <person name="Thorpe A."/>
            <person name="Torcasso W."/>
            <person name="Tracey A."/>
            <person name="Tromans A."/>
            <person name="Tsolas J."/>
            <person name="Wall M."/>
            <person name="Walsh J."/>
            <person name="Wang H."/>
            <person name="Weinstock K."/>
            <person name="West A.P."/>
            <person name="Willey D.L."/>
            <person name="Whitehead S.L."/>
            <person name="Wilming L."/>
            <person name="Wray P.W."/>
            <person name="Young L."/>
            <person name="Chen Y."/>
            <person name="Lovering R.C."/>
            <person name="Moschonas N.K."/>
            <person name="Siebert R."/>
            <person name="Fechtel K."/>
            <person name="Bentley D."/>
            <person name="Durbin R.M."/>
            <person name="Hubbard T."/>
            <person name="Doucette-Stamm L."/>
            <person name="Beck S."/>
            <person name="Smith D.R."/>
            <person name="Rogers J."/>
        </authorList>
    </citation>
    <scope>NUCLEOTIDE SEQUENCE [LARGE SCALE GENOMIC DNA]</scope>
</reference>
<reference key="3">
    <citation type="journal article" date="2004" name="Genome Res.">
        <title>The status, quality, and expansion of the NIH full-length cDNA project: the Mammalian Gene Collection (MGC).</title>
        <authorList>
            <consortium name="The MGC Project Team"/>
        </authorList>
    </citation>
    <scope>NUCLEOTIDE SEQUENCE [LARGE SCALE MRNA] (ISOFORM 2)</scope>
    <scope>VARIANT ILE-408</scope>
    <source>
        <tissue>Testis</tissue>
    </source>
</reference>
<reference key="4">
    <citation type="journal article" date="2000" name="DNA Res.">
        <title>Prediction of the coding sequences of unidentified human genes. XVIII. The complete sequences of 100 new cDNA clones from brain which code for large proteins in vitro.</title>
        <authorList>
            <person name="Nagase T."/>
            <person name="Kikuno R."/>
            <person name="Nakayama M."/>
            <person name="Hirosawa M."/>
            <person name="Ohara O."/>
        </authorList>
    </citation>
    <scope>NUCLEOTIDE SEQUENCE [LARGE SCALE MRNA] OF 25-765 (ISOFORM 1)</scope>
    <source>
        <tissue>Brain</tissue>
    </source>
</reference>
<reference key="5">
    <citation type="journal article" date="2002" name="DNA Res.">
        <title>Construction of expression-ready cDNA clones for KIAA genes: manual curation of 330 KIAA cDNA clones.</title>
        <authorList>
            <person name="Nakajima D."/>
            <person name="Okazaki N."/>
            <person name="Yamakawa H."/>
            <person name="Kikuno R."/>
            <person name="Ohara O."/>
            <person name="Nagase T."/>
        </authorList>
    </citation>
    <scope>SEQUENCE REVISION</scope>
</reference>
<reference key="6">
    <citation type="journal article" date="2014" name="J. Proteomics">
        <title>An enzyme assisted RP-RPLC approach for in-depth analysis of human liver phosphoproteome.</title>
        <authorList>
            <person name="Bian Y."/>
            <person name="Song C."/>
            <person name="Cheng K."/>
            <person name="Dong M."/>
            <person name="Wang F."/>
            <person name="Huang J."/>
            <person name="Sun D."/>
            <person name="Wang L."/>
            <person name="Ye M."/>
            <person name="Zou H."/>
        </authorList>
    </citation>
    <scope>IDENTIFICATION BY MASS SPECTROMETRY [LARGE SCALE ANALYSIS]</scope>
    <source>
        <tissue>Liver</tissue>
    </source>
</reference>
<reference key="7">
    <citation type="journal article" date="2019" name="Clin. Genet.">
        <title>FAM160B1 deficit associated with microcephaly, severe intellectual disability, ataxia, behavioral abnormalities and speech problems.</title>
        <authorList>
            <person name="Mavioglu R.N."/>
            <person name="Kara B."/>
            <person name="Akansel G."/>
            <person name="Nalbant G."/>
            <person name="Tolun A."/>
        </authorList>
    </citation>
    <scope>INVOLVEMENT IN DISEASE</scope>
    <scope>FUNCTION</scope>
    <scope>TISSUE SPECIFICITY</scope>
    <scope>VARIANT 39-GLU--PRO-765 DEL</scope>
</reference>